<feature type="chain" id="PRO_1000002136" description="SsrA-binding protein">
    <location>
        <begin position="1"/>
        <end position="160"/>
    </location>
</feature>
<protein>
    <recommendedName>
        <fullName evidence="1">SsrA-binding protein</fullName>
    </recommendedName>
    <alternativeName>
        <fullName evidence="1">Small protein B</fullName>
    </alternativeName>
</protein>
<comment type="function">
    <text evidence="1">Required for rescue of stalled ribosomes mediated by trans-translation. Binds to transfer-messenger RNA (tmRNA), required for stable association of tmRNA with ribosomes. tmRNA and SmpB together mimic tRNA shape, replacing the anticodon stem-loop with SmpB. tmRNA is encoded by the ssrA gene; the 2 termini fold to resemble tRNA(Ala) and it encodes a 'tag peptide', a short internal open reading frame. During trans-translation Ala-aminoacylated tmRNA acts like a tRNA, entering the A-site of stalled ribosomes, displacing the stalled mRNA. The ribosome then switches to translate the ORF on the tmRNA; the nascent peptide is terminated with the 'tag peptide' encoded by the tmRNA and targeted for degradation. The ribosome is freed to recommence translation, which seems to be the essential function of trans-translation.</text>
</comment>
<comment type="subcellular location">
    <subcellularLocation>
        <location evidence="1">Cytoplasm</location>
    </subcellularLocation>
    <text evidence="1">The tmRNA-SmpB complex associates with stalled 70S ribosomes.</text>
</comment>
<comment type="similarity">
    <text evidence="1">Belongs to the SmpB family.</text>
</comment>
<name>SSRP_SHEAM</name>
<evidence type="ECO:0000255" key="1">
    <source>
        <dbReference type="HAMAP-Rule" id="MF_00023"/>
    </source>
</evidence>
<sequence length="160" mass="18411">MVKKNSKKAAQPATIARNKRATFEYKFDEKFEAGLSLMGWEVKSIRAGKINISESYVMLKNGEAFLHHCHITPLHAASTHVVCDPTRPRKLLLNRRELDRLAGLVERQGYAIVPISMYWRKGAWVKVEIGLGKGKKAHDKRDDIKQRDWDIEKARVMKNK</sequence>
<gene>
    <name evidence="1" type="primary">smpB</name>
    <name type="ordered locus">Sama_2388</name>
</gene>
<keyword id="KW-0963">Cytoplasm</keyword>
<keyword id="KW-1185">Reference proteome</keyword>
<keyword id="KW-0694">RNA-binding</keyword>
<proteinExistence type="inferred from homology"/>
<dbReference type="EMBL" id="CP000507">
    <property type="protein sequence ID" value="ABM00593.1"/>
    <property type="molecule type" value="Genomic_DNA"/>
</dbReference>
<dbReference type="RefSeq" id="WP_011760500.1">
    <property type="nucleotide sequence ID" value="NC_008700.1"/>
</dbReference>
<dbReference type="SMR" id="A1S886"/>
<dbReference type="STRING" id="326297.Sama_2388"/>
<dbReference type="KEGG" id="saz:Sama_2388"/>
<dbReference type="eggNOG" id="COG0691">
    <property type="taxonomic scope" value="Bacteria"/>
</dbReference>
<dbReference type="HOGENOM" id="CLU_108953_3_0_6"/>
<dbReference type="OrthoDB" id="9805462at2"/>
<dbReference type="Proteomes" id="UP000009175">
    <property type="component" value="Chromosome"/>
</dbReference>
<dbReference type="GO" id="GO:0005829">
    <property type="term" value="C:cytosol"/>
    <property type="evidence" value="ECO:0007669"/>
    <property type="project" value="TreeGrafter"/>
</dbReference>
<dbReference type="GO" id="GO:0003723">
    <property type="term" value="F:RNA binding"/>
    <property type="evidence" value="ECO:0007669"/>
    <property type="project" value="UniProtKB-UniRule"/>
</dbReference>
<dbReference type="GO" id="GO:0070929">
    <property type="term" value="P:trans-translation"/>
    <property type="evidence" value="ECO:0007669"/>
    <property type="project" value="UniProtKB-UniRule"/>
</dbReference>
<dbReference type="CDD" id="cd09294">
    <property type="entry name" value="SmpB"/>
    <property type="match status" value="1"/>
</dbReference>
<dbReference type="Gene3D" id="2.40.280.10">
    <property type="match status" value="1"/>
</dbReference>
<dbReference type="HAMAP" id="MF_00023">
    <property type="entry name" value="SmpB"/>
    <property type="match status" value="1"/>
</dbReference>
<dbReference type="InterPro" id="IPR023620">
    <property type="entry name" value="SmpB"/>
</dbReference>
<dbReference type="InterPro" id="IPR000037">
    <property type="entry name" value="SsrA-bd_prot"/>
</dbReference>
<dbReference type="InterPro" id="IPR020081">
    <property type="entry name" value="SsrA-bd_prot_CS"/>
</dbReference>
<dbReference type="NCBIfam" id="NF003843">
    <property type="entry name" value="PRK05422.1"/>
    <property type="match status" value="1"/>
</dbReference>
<dbReference type="NCBIfam" id="TIGR00086">
    <property type="entry name" value="smpB"/>
    <property type="match status" value="1"/>
</dbReference>
<dbReference type="PANTHER" id="PTHR30308:SF2">
    <property type="entry name" value="SSRA-BINDING PROTEIN"/>
    <property type="match status" value="1"/>
</dbReference>
<dbReference type="PANTHER" id="PTHR30308">
    <property type="entry name" value="TMRNA-BINDING COMPONENT OF TRANS-TRANSLATION TAGGING COMPLEX"/>
    <property type="match status" value="1"/>
</dbReference>
<dbReference type="Pfam" id="PF01668">
    <property type="entry name" value="SmpB"/>
    <property type="match status" value="1"/>
</dbReference>
<dbReference type="SUPFAM" id="SSF74982">
    <property type="entry name" value="Small protein B (SmpB)"/>
    <property type="match status" value="1"/>
</dbReference>
<dbReference type="PROSITE" id="PS01317">
    <property type="entry name" value="SSRP"/>
    <property type="match status" value="1"/>
</dbReference>
<reference key="1">
    <citation type="submission" date="2006-12" db="EMBL/GenBank/DDBJ databases">
        <title>Complete sequence of Shewanella amazonensis SB2B.</title>
        <authorList>
            <consortium name="US DOE Joint Genome Institute"/>
            <person name="Copeland A."/>
            <person name="Lucas S."/>
            <person name="Lapidus A."/>
            <person name="Barry K."/>
            <person name="Detter J.C."/>
            <person name="Glavina del Rio T."/>
            <person name="Hammon N."/>
            <person name="Israni S."/>
            <person name="Dalin E."/>
            <person name="Tice H."/>
            <person name="Pitluck S."/>
            <person name="Munk A.C."/>
            <person name="Brettin T."/>
            <person name="Bruce D."/>
            <person name="Han C."/>
            <person name="Tapia R."/>
            <person name="Gilna P."/>
            <person name="Schmutz J."/>
            <person name="Larimer F."/>
            <person name="Land M."/>
            <person name="Hauser L."/>
            <person name="Kyrpides N."/>
            <person name="Mikhailova N."/>
            <person name="Fredrickson J."/>
            <person name="Richardson P."/>
        </authorList>
    </citation>
    <scope>NUCLEOTIDE SEQUENCE [LARGE SCALE GENOMIC DNA]</scope>
    <source>
        <strain>ATCC BAA-1098 / SB2B</strain>
    </source>
</reference>
<accession>A1S886</accession>
<organism>
    <name type="scientific">Shewanella amazonensis (strain ATCC BAA-1098 / SB2B)</name>
    <dbReference type="NCBI Taxonomy" id="326297"/>
    <lineage>
        <taxon>Bacteria</taxon>
        <taxon>Pseudomonadati</taxon>
        <taxon>Pseudomonadota</taxon>
        <taxon>Gammaproteobacteria</taxon>
        <taxon>Alteromonadales</taxon>
        <taxon>Shewanellaceae</taxon>
        <taxon>Shewanella</taxon>
    </lineage>
</organism>